<name>NRDI_BRUSU</name>
<reference key="1">
    <citation type="journal article" date="2002" name="Proc. Natl. Acad. Sci. U.S.A.">
        <title>The Brucella suis genome reveals fundamental similarities between animal and plant pathogens and symbionts.</title>
        <authorList>
            <person name="Paulsen I.T."/>
            <person name="Seshadri R."/>
            <person name="Nelson K.E."/>
            <person name="Eisen J.A."/>
            <person name="Heidelberg J.F."/>
            <person name="Read T.D."/>
            <person name="Dodson R.J."/>
            <person name="Umayam L.A."/>
            <person name="Brinkac L.M."/>
            <person name="Beanan M.J."/>
            <person name="Daugherty S.C."/>
            <person name="DeBoy R.T."/>
            <person name="Durkin A.S."/>
            <person name="Kolonay J.F."/>
            <person name="Madupu R."/>
            <person name="Nelson W.C."/>
            <person name="Ayodeji B."/>
            <person name="Kraul M."/>
            <person name="Shetty J."/>
            <person name="Malek J.A."/>
            <person name="Van Aken S.E."/>
            <person name="Riedmuller S."/>
            <person name="Tettelin H."/>
            <person name="Gill S.R."/>
            <person name="White O."/>
            <person name="Salzberg S.L."/>
            <person name="Hoover D.L."/>
            <person name="Lindler L.E."/>
            <person name="Halling S.M."/>
            <person name="Boyle S.M."/>
            <person name="Fraser C.M."/>
        </authorList>
    </citation>
    <scope>NUCLEOTIDE SEQUENCE [LARGE SCALE GENOMIC DNA]</scope>
    <source>
        <strain>1330</strain>
    </source>
</reference>
<reference key="2">
    <citation type="journal article" date="2011" name="J. Bacteriol.">
        <title>Revised genome sequence of Brucella suis 1330.</title>
        <authorList>
            <person name="Tae H."/>
            <person name="Shallom S."/>
            <person name="Settlage R."/>
            <person name="Preston D."/>
            <person name="Adams L.G."/>
            <person name="Garner H.R."/>
        </authorList>
    </citation>
    <scope>NUCLEOTIDE SEQUENCE [LARGE SCALE GENOMIC DNA]</scope>
    <source>
        <strain>1330</strain>
    </source>
</reference>
<comment type="function">
    <text evidence="1">Probably involved in ribonucleotide reductase function.</text>
</comment>
<comment type="similarity">
    <text evidence="1">Belongs to the NrdI family.</text>
</comment>
<sequence length="135" mass="14656">MSLIVYFSSRSGNTHRFVERLGVRSSRIPLEASGALQVREPFVLVTPTYGGGSTKGAVPNPVIRFLNDADNRALIRGVIAAGNSNFGEAFCIAGNIISAKCGVPYLYRFELLGTAEDVGNVRNGMEQFWTRQTQA</sequence>
<feature type="chain" id="PRO_0000164310" description="Protein NrdI">
    <location>
        <begin position="1"/>
        <end position="135"/>
    </location>
</feature>
<dbReference type="EMBL" id="AE014292">
    <property type="protein sequence ID" value="AAN33515.1"/>
    <property type="molecule type" value="Genomic_DNA"/>
</dbReference>
<dbReference type="EMBL" id="CP002998">
    <property type="protein sequence ID" value="AEM19794.1"/>
    <property type="molecule type" value="Genomic_DNA"/>
</dbReference>
<dbReference type="RefSeq" id="WP_002966273.1">
    <property type="nucleotide sequence ID" value="NZ_KN046805.1"/>
</dbReference>
<dbReference type="SMR" id="P65547"/>
<dbReference type="GeneID" id="97535519"/>
<dbReference type="KEGG" id="bms:BRA0315"/>
<dbReference type="KEGG" id="bsi:BS1330_II0312"/>
<dbReference type="PATRIC" id="fig|204722.21.peg.191"/>
<dbReference type="HOGENOM" id="CLU_114845_0_0_5"/>
<dbReference type="PhylomeDB" id="P65547"/>
<dbReference type="Proteomes" id="UP000007104">
    <property type="component" value="Chromosome II"/>
</dbReference>
<dbReference type="GO" id="GO:0010181">
    <property type="term" value="F:FMN binding"/>
    <property type="evidence" value="ECO:0007669"/>
    <property type="project" value="InterPro"/>
</dbReference>
<dbReference type="GO" id="GO:0036211">
    <property type="term" value="P:protein modification process"/>
    <property type="evidence" value="ECO:0007669"/>
    <property type="project" value="InterPro"/>
</dbReference>
<dbReference type="Gene3D" id="3.40.50.360">
    <property type="match status" value="1"/>
</dbReference>
<dbReference type="HAMAP" id="MF_00128">
    <property type="entry name" value="NrdI"/>
    <property type="match status" value="1"/>
</dbReference>
<dbReference type="InterPro" id="IPR029039">
    <property type="entry name" value="Flavoprotein-like_sf"/>
</dbReference>
<dbReference type="InterPro" id="IPR020852">
    <property type="entry name" value="RNR_Ib_NrdI_bac"/>
</dbReference>
<dbReference type="InterPro" id="IPR004465">
    <property type="entry name" value="RNR_NrdI"/>
</dbReference>
<dbReference type="NCBIfam" id="TIGR00333">
    <property type="entry name" value="nrdI"/>
    <property type="match status" value="1"/>
</dbReference>
<dbReference type="PANTHER" id="PTHR37297">
    <property type="entry name" value="PROTEIN NRDI"/>
    <property type="match status" value="1"/>
</dbReference>
<dbReference type="PANTHER" id="PTHR37297:SF1">
    <property type="entry name" value="PROTEIN NRDI"/>
    <property type="match status" value="1"/>
</dbReference>
<dbReference type="Pfam" id="PF07972">
    <property type="entry name" value="Flavodoxin_NdrI"/>
    <property type="match status" value="1"/>
</dbReference>
<dbReference type="PIRSF" id="PIRSF005087">
    <property type="entry name" value="NrdI"/>
    <property type="match status" value="1"/>
</dbReference>
<dbReference type="SUPFAM" id="SSF52218">
    <property type="entry name" value="Flavoproteins"/>
    <property type="match status" value="1"/>
</dbReference>
<accession>P65547</accession>
<accession>G0KFF0</accession>
<accession>Q8YBG9</accession>
<organism>
    <name type="scientific">Brucella suis biovar 1 (strain 1330)</name>
    <dbReference type="NCBI Taxonomy" id="204722"/>
    <lineage>
        <taxon>Bacteria</taxon>
        <taxon>Pseudomonadati</taxon>
        <taxon>Pseudomonadota</taxon>
        <taxon>Alphaproteobacteria</taxon>
        <taxon>Hyphomicrobiales</taxon>
        <taxon>Brucellaceae</taxon>
        <taxon>Brucella/Ochrobactrum group</taxon>
        <taxon>Brucella</taxon>
    </lineage>
</organism>
<evidence type="ECO:0000255" key="1">
    <source>
        <dbReference type="HAMAP-Rule" id="MF_00128"/>
    </source>
</evidence>
<gene>
    <name evidence="1" type="primary">nrdI</name>
    <name type="ordered locus">BRA0315</name>
    <name type="ordered locus">BS1330_II0312</name>
</gene>
<proteinExistence type="inferred from homology"/>
<protein>
    <recommendedName>
        <fullName evidence="1">Protein NrdI</fullName>
    </recommendedName>
</protein>